<dbReference type="EMBL" id="GU293029">
    <property type="protein sequence ID" value="ADB56845.1"/>
    <property type="molecule type" value="mRNA"/>
</dbReference>
<dbReference type="SMR" id="D2Y2F2"/>
<dbReference type="ArachnoServer" id="AS001545">
    <property type="toxin name" value="omega-theraphotoxin-Hhn2b"/>
</dbReference>
<dbReference type="GO" id="GO:0005576">
    <property type="term" value="C:extracellular region"/>
    <property type="evidence" value="ECO:0007669"/>
    <property type="project" value="UniProtKB-SubCell"/>
</dbReference>
<dbReference type="GO" id="GO:0005246">
    <property type="term" value="F:calcium channel regulator activity"/>
    <property type="evidence" value="ECO:0007669"/>
    <property type="project" value="UniProtKB-KW"/>
</dbReference>
<dbReference type="GO" id="GO:0090729">
    <property type="term" value="F:toxin activity"/>
    <property type="evidence" value="ECO:0007669"/>
    <property type="project" value="UniProtKB-KW"/>
</dbReference>
<dbReference type="SUPFAM" id="SSF57059">
    <property type="entry name" value="omega toxin-like"/>
    <property type="match status" value="1"/>
</dbReference>
<proteinExistence type="evidence at transcript level"/>
<feature type="signal peptide" evidence="2">
    <location>
        <begin position="1"/>
        <end position="26"/>
    </location>
</feature>
<feature type="propeptide" id="PRO_0000400974" evidence="1">
    <location>
        <begin position="27"/>
        <end position="43"/>
    </location>
</feature>
<feature type="peptide" id="PRO_0000400975" description="Hainantoxin-X-2">
    <location>
        <begin position="44"/>
        <end position="71"/>
    </location>
</feature>
<feature type="disulfide bond" evidence="1">
    <location>
        <begin position="52"/>
        <end position="65"/>
    </location>
</feature>
<feature type="disulfide bond" evidence="1">
    <location>
        <begin position="61"/>
        <end position="70"/>
    </location>
</feature>
<keyword id="KW-0108">Calcium channel impairing toxin</keyword>
<keyword id="KW-1015">Disulfide bond</keyword>
<keyword id="KW-0872">Ion channel impairing toxin</keyword>
<keyword id="KW-0960">Knottin</keyword>
<keyword id="KW-0528">Neurotoxin</keyword>
<keyword id="KW-0964">Secreted</keyword>
<keyword id="KW-0732">Signal</keyword>
<keyword id="KW-0800">Toxin</keyword>
<keyword id="KW-1218">Voltage-gated calcium channel impairing toxin</keyword>
<sequence length="71" mass="7649">MKTAIFTVVLALAVFAVLCLVVSTHAERHSKTDMEDSPMIQERKGLPPGKPCYGATQKIPCCGVCSHNNCT</sequence>
<reference key="1">
    <citation type="journal article" date="2010" name="J. Proteome Res.">
        <title>Molecular diversification of peptide toxins from the tarantula Haplopelma hainanum (Ornithoctonus hainana) venom based on transcriptomic, peptidomic, and genomic analyses.</title>
        <authorList>
            <person name="Tang X."/>
            <person name="Zhang Y."/>
            <person name="Hu W."/>
            <person name="Xu D."/>
            <person name="Tao H."/>
            <person name="Yang X."/>
            <person name="Li Y."/>
            <person name="Jiang L."/>
            <person name="Liang S."/>
        </authorList>
    </citation>
    <scope>NUCLEOTIDE SEQUENCE [LARGE SCALE MRNA]</scope>
    <source>
        <tissue>Venom gland</tissue>
    </source>
</reference>
<organism>
    <name type="scientific">Cyriopagopus hainanus</name>
    <name type="common">Chinese bird spider</name>
    <name type="synonym">Haplopelma hainanum</name>
    <dbReference type="NCBI Taxonomy" id="209901"/>
    <lineage>
        <taxon>Eukaryota</taxon>
        <taxon>Metazoa</taxon>
        <taxon>Ecdysozoa</taxon>
        <taxon>Arthropoda</taxon>
        <taxon>Chelicerata</taxon>
        <taxon>Arachnida</taxon>
        <taxon>Araneae</taxon>
        <taxon>Mygalomorphae</taxon>
        <taxon>Theraphosidae</taxon>
        <taxon>Haplopelma</taxon>
    </lineage>
</organism>
<evidence type="ECO:0000250" key="1"/>
<evidence type="ECO:0000255" key="2"/>
<evidence type="ECO:0000305" key="3"/>
<protein>
    <recommendedName>
        <fullName>Hainantoxin-X-2</fullName>
        <shortName>HNTX-X-2</shortName>
    </recommendedName>
</protein>
<name>H10B1_CYRHA</name>
<comment type="function">
    <text evidence="1">Reversibly blocks N-type calcium channels (Cav2.2/CACNA1B) in rat dorsal root ganglion cells. Elicits no toxic symptoms in either vertebrates or invertebrates during a period of 48 hours post-injection, when it was assayed in vivo by direct injection into mice and cockroaches (By similarity).</text>
</comment>
<comment type="subcellular location">
    <subcellularLocation>
        <location evidence="1">Secreted</location>
    </subcellularLocation>
</comment>
<comment type="tissue specificity">
    <text>Expressed by the venom gland.</text>
</comment>
<comment type="domain">
    <text evidence="1">The presence of a 'disulfide through disulfide knot' structurally defines this protein as a knottin.</text>
</comment>
<comment type="similarity">
    <text>Belongs to the neurotoxin 36 family. 02 subfamily.</text>
</comment>
<comment type="caution">
    <text evidence="3">While it is structurally defined as a knottin it lacks the conserved Cys residue in position 45.</text>
</comment>
<accession>D2Y2F2</accession>